<evidence type="ECO:0000250" key="1"/>
<evidence type="ECO:0000250" key="2">
    <source>
        <dbReference type="UniProtKB" id="B7QK46"/>
    </source>
</evidence>
<evidence type="ECO:0000250" key="3">
    <source>
        <dbReference type="UniProtKB" id="Q16769"/>
    </source>
</evidence>
<evidence type="ECO:0000255" key="4"/>
<evidence type="ECO:0000305" key="5"/>
<organism>
    <name type="scientific">Boiga irregularis</name>
    <name type="common">Brown tree snake</name>
    <dbReference type="NCBI Taxonomy" id="92519"/>
    <lineage>
        <taxon>Eukaryota</taxon>
        <taxon>Metazoa</taxon>
        <taxon>Chordata</taxon>
        <taxon>Craniata</taxon>
        <taxon>Vertebrata</taxon>
        <taxon>Euteleostomi</taxon>
        <taxon>Lepidosauria</taxon>
        <taxon>Squamata</taxon>
        <taxon>Bifurcata</taxon>
        <taxon>Unidentata</taxon>
        <taxon>Episquamata</taxon>
        <taxon>Toxicofera</taxon>
        <taxon>Serpentes</taxon>
        <taxon>Colubroidea</taxon>
        <taxon>Colubridae</taxon>
        <taxon>Colubrinae</taxon>
        <taxon>Boiga</taxon>
    </lineage>
</organism>
<protein>
    <recommendedName>
        <fullName>Glutaminyl-peptide cyclotransferase</fullName>
        <ecNumber>2.3.2.5</ecNumber>
    </recommendedName>
    <alternativeName>
        <fullName>Glutaminyl cyclase</fullName>
        <shortName>QC</shortName>
    </alternativeName>
    <alternativeName>
        <fullName>Glutaminyl-tRNA cyclotransferase</fullName>
    </alternativeName>
</protein>
<comment type="function">
    <text evidence="1">Responsible for the biosynthesis of pyroglutamyl peptides. Has a bias against acidic and tryptophan residues adjacent to the N-terminal glutaminyl residue and a lack of importance of chain length after the second residue. Also catalyzes N-terminal pyroglutamate formation (By similarity).</text>
</comment>
<comment type="catalytic activity">
    <reaction>
        <text>N-terminal L-glutaminyl-[peptide] = N-terminal 5-oxo-L-prolyl-[peptide] + NH4(+)</text>
        <dbReference type="Rhea" id="RHEA:23652"/>
        <dbReference type="Rhea" id="RHEA-COMP:11736"/>
        <dbReference type="Rhea" id="RHEA-COMP:11846"/>
        <dbReference type="ChEBI" id="CHEBI:28938"/>
        <dbReference type="ChEBI" id="CHEBI:64722"/>
        <dbReference type="ChEBI" id="CHEBI:87215"/>
        <dbReference type="EC" id="2.3.2.5"/>
    </reaction>
</comment>
<comment type="subcellular location">
    <subcellularLocation>
        <location evidence="1">Secreted</location>
    </subcellularLocation>
</comment>
<comment type="tissue specificity">
    <text>Expressed by the venom gland.</text>
</comment>
<comment type="similarity">
    <text evidence="5">Belongs to the glutaminyl-peptide cyclotransferase family.</text>
</comment>
<comment type="caution">
    <text evidence="2 3">It is unclear whether this protein requires a metal cofactor for catalysis. It was originally proposed to be a Zn(2+)-dependent metalloenzyme based on structural similarities to bacterial aminopeptidases and the observation that it can bind Zn(2+) ions, typically in a 1:1 stoichiometry (By similarity). However, a recent study suggests a Zn(2+)-independent catalytic mechanism (By similarity).</text>
</comment>
<sequence length="368" mass="41990">MAGERRDSKAAAFFCLAWALCLALPGFPQHVGGREDRADWTQEKYSHRPTILNATSILQVTSQTNVNRMWQNDLHPILIERYPGSPGSYAVRQHIKHRLQGLQAGWLVEEDTFQSHTPYGYRTFSNIISTLNPLAKRHLVVACHYDSKYFLPQLDGKVFVGATDSAVPCAMMLELARSLDRQLSFLKQSSLPPKADLSLKLIFFDGEEAFVRWSPSDSLYGSRSLAQKMASTPHPPGARNTNQIQGIDLFVLLDLIGARNPVFPVYFLNTARWFGRLEAIEQSLHDLGLLNNYSSERQYFRSNLRRYPVEDDHIPFLRRGVPILHLIPSPFPRVWHTMEDNEENLDKPTIDNISKILQVFVLEYLNLG</sequence>
<dbReference type="EC" id="2.3.2.5"/>
<dbReference type="EMBL" id="DQ404533">
    <property type="protein sequence ID" value="ABD64599.1"/>
    <property type="molecule type" value="mRNA"/>
</dbReference>
<dbReference type="SMR" id="A7ISW1"/>
<dbReference type="MEROPS" id="M28.974"/>
<dbReference type="GlyCosmos" id="A7ISW1">
    <property type="glycosylation" value="3 sites, No reported glycans"/>
</dbReference>
<dbReference type="BRENDA" id="2.3.2.5">
    <property type="organism ID" value="9166"/>
</dbReference>
<dbReference type="GO" id="GO:0005576">
    <property type="term" value="C:extracellular region"/>
    <property type="evidence" value="ECO:0007669"/>
    <property type="project" value="UniProtKB-SubCell"/>
</dbReference>
<dbReference type="GO" id="GO:0016603">
    <property type="term" value="F:glutaminyl-peptide cyclotransferase activity"/>
    <property type="evidence" value="ECO:0000250"/>
    <property type="project" value="UniProtKB"/>
</dbReference>
<dbReference type="GO" id="GO:0008270">
    <property type="term" value="F:zinc ion binding"/>
    <property type="evidence" value="ECO:0000250"/>
    <property type="project" value="UniProtKB"/>
</dbReference>
<dbReference type="GO" id="GO:0017186">
    <property type="term" value="P:peptidyl-pyroglutamic acid biosynthetic process, using glutaminyl-peptide cyclotransferase"/>
    <property type="evidence" value="ECO:0000250"/>
    <property type="project" value="UniProtKB"/>
</dbReference>
<dbReference type="CDD" id="cd03880">
    <property type="entry name" value="M28_QC_like"/>
    <property type="match status" value="1"/>
</dbReference>
<dbReference type="FunFam" id="3.40.630.10:FF:000029">
    <property type="entry name" value="Glutaminyl-peptide cyclotransferase"/>
    <property type="match status" value="1"/>
</dbReference>
<dbReference type="Gene3D" id="3.40.630.10">
    <property type="entry name" value="Zn peptidases"/>
    <property type="match status" value="1"/>
</dbReference>
<dbReference type="InterPro" id="IPR037457">
    <property type="entry name" value="M28_QC"/>
</dbReference>
<dbReference type="InterPro" id="IPR007484">
    <property type="entry name" value="Peptidase_M28"/>
</dbReference>
<dbReference type="InterPro" id="IPR040234">
    <property type="entry name" value="QC/QCL"/>
</dbReference>
<dbReference type="PANTHER" id="PTHR12283">
    <property type="entry name" value="GLUTAMINYL-PEPTIDE CYCLOTRANSFERASE"/>
    <property type="match status" value="1"/>
</dbReference>
<dbReference type="PANTHER" id="PTHR12283:SF5">
    <property type="entry name" value="GLUTAMINYL-PEPTIDE CYCLOTRANSFERASE"/>
    <property type="match status" value="1"/>
</dbReference>
<dbReference type="Pfam" id="PF04389">
    <property type="entry name" value="Peptidase_M28"/>
    <property type="match status" value="1"/>
</dbReference>
<dbReference type="SUPFAM" id="SSF53187">
    <property type="entry name" value="Zn-dependent exopeptidases"/>
    <property type="match status" value="1"/>
</dbReference>
<accession>A7ISW1</accession>
<name>QPCT_BOIIR</name>
<gene>
    <name type="primary">QPCT</name>
</gene>
<keyword id="KW-0012">Acyltransferase</keyword>
<keyword id="KW-1015">Disulfide bond</keyword>
<keyword id="KW-0325">Glycoprotein</keyword>
<keyword id="KW-0479">Metal-binding</keyword>
<keyword id="KW-0964">Secreted</keyword>
<keyword id="KW-0732">Signal</keyword>
<keyword id="KW-0808">Transferase</keyword>
<keyword id="KW-0862">Zinc</keyword>
<proteinExistence type="evidence at transcript level"/>
<reference key="1">
    <citation type="submission" date="2006-02" db="EMBL/GenBank/DDBJ databases">
        <title>Glutaminyl cyclase expressed in Boiga irregularis venom gland tissue.</title>
        <authorList>
            <person name="Pawlak J."/>
            <person name="Kini M.R."/>
        </authorList>
    </citation>
    <scope>NUCLEOTIDE SEQUENCE [MRNA]</scope>
    <source>
        <tissue>Venom gland</tissue>
    </source>
</reference>
<feature type="signal peptide" evidence="4">
    <location>
        <begin position="1"/>
        <end position="23"/>
    </location>
</feature>
<feature type="chain" id="PRO_0000407861" description="Glutaminyl-peptide cyclotransferase">
    <location>
        <begin position="24"/>
        <end position="368"/>
    </location>
</feature>
<feature type="active site" description="Proton acceptor" evidence="3">
    <location>
        <position position="207"/>
    </location>
</feature>
<feature type="active site" description="Proton acceptor" evidence="3">
    <location>
        <position position="254"/>
    </location>
</feature>
<feature type="binding site" evidence="3">
    <location>
        <position position="164"/>
    </location>
    <ligand>
        <name>Zn(2+)</name>
        <dbReference type="ChEBI" id="CHEBI:29105"/>
    </ligand>
</feature>
<feature type="binding site" evidence="3">
    <location>
        <position position="208"/>
    </location>
    <ligand>
        <name>Zn(2+)</name>
        <dbReference type="ChEBI" id="CHEBI:29105"/>
    </ligand>
</feature>
<feature type="binding site" evidence="3">
    <location>
        <position position="336"/>
    </location>
    <ligand>
        <name>Zn(2+)</name>
        <dbReference type="ChEBI" id="CHEBI:29105"/>
    </ligand>
</feature>
<feature type="glycosylation site" description="N-linked (GlcNAc...) asparagine" evidence="4">
    <location>
        <position position="53"/>
    </location>
</feature>
<feature type="glycosylation site" description="N-linked (GlcNAc...) asparagine" evidence="4">
    <location>
        <position position="292"/>
    </location>
</feature>
<feature type="glycosylation site" description="N-linked (GlcNAc...) asparagine" evidence="4">
    <location>
        <position position="352"/>
    </location>
</feature>
<feature type="disulfide bond" evidence="3">
    <location>
        <begin position="143"/>
        <end position="169"/>
    </location>
</feature>